<gene>
    <name evidence="1" type="primary">hisS</name>
    <name type="ordered locus">STER_1950</name>
</gene>
<evidence type="ECO:0000255" key="1">
    <source>
        <dbReference type="HAMAP-Rule" id="MF_00127"/>
    </source>
</evidence>
<keyword id="KW-0030">Aminoacyl-tRNA synthetase</keyword>
<keyword id="KW-0067">ATP-binding</keyword>
<keyword id="KW-0963">Cytoplasm</keyword>
<keyword id="KW-0436">Ligase</keyword>
<keyword id="KW-0547">Nucleotide-binding</keyword>
<keyword id="KW-0648">Protein biosynthesis</keyword>
<dbReference type="EC" id="6.1.1.21" evidence="1"/>
<dbReference type="EMBL" id="CP000419">
    <property type="protein sequence ID" value="ABJ67060.1"/>
    <property type="molecule type" value="Genomic_DNA"/>
</dbReference>
<dbReference type="RefSeq" id="WP_011681741.1">
    <property type="nucleotide sequence ID" value="NZ_CP086001.1"/>
</dbReference>
<dbReference type="SMR" id="Q03IB2"/>
<dbReference type="KEGG" id="ste:STER_1950"/>
<dbReference type="HOGENOM" id="CLU_025113_1_1_9"/>
<dbReference type="GO" id="GO:0005737">
    <property type="term" value="C:cytoplasm"/>
    <property type="evidence" value="ECO:0007669"/>
    <property type="project" value="UniProtKB-SubCell"/>
</dbReference>
<dbReference type="GO" id="GO:0005524">
    <property type="term" value="F:ATP binding"/>
    <property type="evidence" value="ECO:0007669"/>
    <property type="project" value="UniProtKB-UniRule"/>
</dbReference>
<dbReference type="GO" id="GO:0140096">
    <property type="term" value="F:catalytic activity, acting on a protein"/>
    <property type="evidence" value="ECO:0007669"/>
    <property type="project" value="UniProtKB-ARBA"/>
</dbReference>
<dbReference type="GO" id="GO:0004821">
    <property type="term" value="F:histidine-tRNA ligase activity"/>
    <property type="evidence" value="ECO:0007669"/>
    <property type="project" value="UniProtKB-UniRule"/>
</dbReference>
<dbReference type="GO" id="GO:0016740">
    <property type="term" value="F:transferase activity"/>
    <property type="evidence" value="ECO:0007669"/>
    <property type="project" value="UniProtKB-ARBA"/>
</dbReference>
<dbReference type="GO" id="GO:0006427">
    <property type="term" value="P:histidyl-tRNA aminoacylation"/>
    <property type="evidence" value="ECO:0007669"/>
    <property type="project" value="UniProtKB-UniRule"/>
</dbReference>
<dbReference type="CDD" id="cd00773">
    <property type="entry name" value="HisRS-like_core"/>
    <property type="match status" value="1"/>
</dbReference>
<dbReference type="CDD" id="cd00859">
    <property type="entry name" value="HisRS_anticodon"/>
    <property type="match status" value="1"/>
</dbReference>
<dbReference type="FunFam" id="3.30.930.10:FF:000005">
    <property type="entry name" value="Histidine--tRNA ligase"/>
    <property type="match status" value="1"/>
</dbReference>
<dbReference type="Gene3D" id="3.40.50.800">
    <property type="entry name" value="Anticodon-binding domain"/>
    <property type="match status" value="1"/>
</dbReference>
<dbReference type="Gene3D" id="3.30.930.10">
    <property type="entry name" value="Bira Bifunctional Protein, Domain 2"/>
    <property type="match status" value="1"/>
</dbReference>
<dbReference type="HAMAP" id="MF_00127">
    <property type="entry name" value="His_tRNA_synth"/>
    <property type="match status" value="1"/>
</dbReference>
<dbReference type="InterPro" id="IPR006195">
    <property type="entry name" value="aa-tRNA-synth_II"/>
</dbReference>
<dbReference type="InterPro" id="IPR045864">
    <property type="entry name" value="aa-tRNA-synth_II/BPL/LPL"/>
</dbReference>
<dbReference type="InterPro" id="IPR004154">
    <property type="entry name" value="Anticodon-bd"/>
</dbReference>
<dbReference type="InterPro" id="IPR036621">
    <property type="entry name" value="Anticodon-bd_dom_sf"/>
</dbReference>
<dbReference type="InterPro" id="IPR015807">
    <property type="entry name" value="His-tRNA-ligase"/>
</dbReference>
<dbReference type="InterPro" id="IPR041715">
    <property type="entry name" value="HisRS-like_core"/>
</dbReference>
<dbReference type="InterPro" id="IPR004516">
    <property type="entry name" value="HisRS/HisZ"/>
</dbReference>
<dbReference type="InterPro" id="IPR033656">
    <property type="entry name" value="HisRS_anticodon"/>
</dbReference>
<dbReference type="NCBIfam" id="TIGR00442">
    <property type="entry name" value="hisS"/>
    <property type="match status" value="1"/>
</dbReference>
<dbReference type="PANTHER" id="PTHR43707:SF1">
    <property type="entry name" value="HISTIDINE--TRNA LIGASE, MITOCHONDRIAL-RELATED"/>
    <property type="match status" value="1"/>
</dbReference>
<dbReference type="PANTHER" id="PTHR43707">
    <property type="entry name" value="HISTIDYL-TRNA SYNTHETASE"/>
    <property type="match status" value="1"/>
</dbReference>
<dbReference type="Pfam" id="PF03129">
    <property type="entry name" value="HGTP_anticodon"/>
    <property type="match status" value="1"/>
</dbReference>
<dbReference type="Pfam" id="PF13393">
    <property type="entry name" value="tRNA-synt_His"/>
    <property type="match status" value="1"/>
</dbReference>
<dbReference type="PIRSF" id="PIRSF001549">
    <property type="entry name" value="His-tRNA_synth"/>
    <property type="match status" value="1"/>
</dbReference>
<dbReference type="SUPFAM" id="SSF52954">
    <property type="entry name" value="Class II aaRS ABD-related"/>
    <property type="match status" value="1"/>
</dbReference>
<dbReference type="SUPFAM" id="SSF55681">
    <property type="entry name" value="Class II aaRS and biotin synthetases"/>
    <property type="match status" value="1"/>
</dbReference>
<dbReference type="PROSITE" id="PS50862">
    <property type="entry name" value="AA_TRNA_LIGASE_II"/>
    <property type="match status" value="1"/>
</dbReference>
<name>SYH_STRTD</name>
<accession>Q03IB2</accession>
<protein>
    <recommendedName>
        <fullName evidence="1">Histidine--tRNA ligase</fullName>
        <ecNumber evidence="1">6.1.1.21</ecNumber>
    </recommendedName>
    <alternativeName>
        <fullName evidence="1">Histidyl-tRNA synthetase</fullName>
        <shortName evidence="1">HisRS</shortName>
    </alternativeName>
</protein>
<feature type="chain" id="PRO_1000016468" description="Histidine--tRNA ligase">
    <location>
        <begin position="1"/>
        <end position="426"/>
    </location>
</feature>
<proteinExistence type="inferred from homology"/>
<comment type="catalytic activity">
    <reaction evidence="1">
        <text>tRNA(His) + L-histidine + ATP = L-histidyl-tRNA(His) + AMP + diphosphate + H(+)</text>
        <dbReference type="Rhea" id="RHEA:17313"/>
        <dbReference type="Rhea" id="RHEA-COMP:9665"/>
        <dbReference type="Rhea" id="RHEA-COMP:9689"/>
        <dbReference type="ChEBI" id="CHEBI:15378"/>
        <dbReference type="ChEBI" id="CHEBI:30616"/>
        <dbReference type="ChEBI" id="CHEBI:33019"/>
        <dbReference type="ChEBI" id="CHEBI:57595"/>
        <dbReference type="ChEBI" id="CHEBI:78442"/>
        <dbReference type="ChEBI" id="CHEBI:78527"/>
        <dbReference type="ChEBI" id="CHEBI:456215"/>
        <dbReference type="EC" id="6.1.1.21"/>
    </reaction>
</comment>
<comment type="subunit">
    <text evidence="1">Homodimer.</text>
</comment>
<comment type="subcellular location">
    <subcellularLocation>
        <location evidence="1">Cytoplasm</location>
    </subcellularLocation>
</comment>
<comment type="similarity">
    <text evidence="1">Belongs to the class-II aminoacyl-tRNA synthetase family.</text>
</comment>
<reference key="1">
    <citation type="journal article" date="2006" name="Proc. Natl. Acad. Sci. U.S.A.">
        <title>Comparative genomics of the lactic acid bacteria.</title>
        <authorList>
            <person name="Makarova K.S."/>
            <person name="Slesarev A."/>
            <person name="Wolf Y.I."/>
            <person name="Sorokin A."/>
            <person name="Mirkin B."/>
            <person name="Koonin E.V."/>
            <person name="Pavlov A."/>
            <person name="Pavlova N."/>
            <person name="Karamychev V."/>
            <person name="Polouchine N."/>
            <person name="Shakhova V."/>
            <person name="Grigoriev I."/>
            <person name="Lou Y."/>
            <person name="Rohksar D."/>
            <person name="Lucas S."/>
            <person name="Huang K."/>
            <person name="Goodstein D.M."/>
            <person name="Hawkins T."/>
            <person name="Plengvidhya V."/>
            <person name="Welker D."/>
            <person name="Hughes J."/>
            <person name="Goh Y."/>
            <person name="Benson A."/>
            <person name="Baldwin K."/>
            <person name="Lee J.-H."/>
            <person name="Diaz-Muniz I."/>
            <person name="Dosti B."/>
            <person name="Smeianov V."/>
            <person name="Wechter W."/>
            <person name="Barabote R."/>
            <person name="Lorca G."/>
            <person name="Altermann E."/>
            <person name="Barrangou R."/>
            <person name="Ganesan B."/>
            <person name="Xie Y."/>
            <person name="Rawsthorne H."/>
            <person name="Tamir D."/>
            <person name="Parker C."/>
            <person name="Breidt F."/>
            <person name="Broadbent J.R."/>
            <person name="Hutkins R."/>
            <person name="O'Sullivan D."/>
            <person name="Steele J."/>
            <person name="Unlu G."/>
            <person name="Saier M.H. Jr."/>
            <person name="Klaenhammer T."/>
            <person name="Richardson P."/>
            <person name="Kozyavkin S."/>
            <person name="Weimer B.C."/>
            <person name="Mills D.A."/>
        </authorList>
    </citation>
    <scope>NUCLEOTIDE SEQUENCE [LARGE SCALE GENOMIC DNA]</scope>
    <source>
        <strain>ATCC BAA-491 / LMD-9</strain>
    </source>
</reference>
<organism>
    <name type="scientific">Streptococcus thermophilus (strain ATCC BAA-491 / LMD-9)</name>
    <dbReference type="NCBI Taxonomy" id="322159"/>
    <lineage>
        <taxon>Bacteria</taxon>
        <taxon>Bacillati</taxon>
        <taxon>Bacillota</taxon>
        <taxon>Bacilli</taxon>
        <taxon>Lactobacillales</taxon>
        <taxon>Streptococcaceae</taxon>
        <taxon>Streptococcus</taxon>
    </lineage>
</organism>
<sequence length="426" mass="48366">MKLQKPKGTQDILPGDSAKWQYVENVARETFKKYNYGEIRTPMFEHYEVISRSVGDTTDIVTKEMYDFHDKGDRHITLRPEGTAPVVRSYVENKLFAPEVQKPVKVYYIGSMFRYERPQAGRLREFHQLGVECFGSKNPATDVETIAMAYQLFNTLGIKDVTLHLNSLGNTDSRLAYRQALIDYLTPMRESLSKDSQRRLEENPLRVLDSKEKEDKVAVENAPSILDYLDEESQTHFDEVRAMLDSLNIPYVIDTNMVRGLDYYNHTIFEFITTIDKSELTICAGGRYDSLVEYFGGPETAGFGFGLGLERLLLVLDKQGIKLPVEESLDVYIAVLGSGANGKALELVQSIRYQGFKAERDYLGRKIKAQFKSADTFKAKTVITLGESEVESGVVKVKNNATREEVTVSFEELTTNFATVLKQLEK</sequence>